<accession>Q14AX6</accession>
<accession>A2A530</accession>
<accession>A2A531</accession>
<accession>B1AQH7</accession>
<accession>Q6ZQ27</accession>
<accession>Q8R457</accession>
<sequence length="1484" mass="163681">MPNSERHGGKKDGSGGASGTSQPSSGGGSSNSRERHRLVSKHKRHKSKHSKDVGLVTPEAASLGTIIKPLVEYDDISSDSDTFSDDTAFKSDRRENEERRGTDRSDRLHRHRHHQHRRSRDLLKTKQTEKEKNQEVSKSGSMKDRVSGSSKRSVEGSDDYGKAQLSKSGSKESRSSKMHKEKTRKERELKSGYKDRSKSHRKRETPKSYKTVASPKRRSRSPHRKWSDSSKQDDSPSGASYGQDYDLSPPRSHTSSNYDSYKKSPGSTSRRQSISPPYKEPSAYQSSTRSPSPYSRRQRSVSPYSRRRSSSYERSGSYSGRSPSPYGRRRSSSPFLSKRSLSRSPLPSRKSMKSRSRSPAYSRHSSSHSKKKRSGSRSRHSSISPVRLPLNSSLGAELSRKKKERAAAAAAAKMDGKESKSSPIILPKKEKLEVKESGLESKKLPRSIKSEKSTPDTELVTVAHSNPEVKHCLDTGKVRLDENLQKHPAKDLKAQGTKDVKPVAPKEVIVTSKETETSEKETLPPLPTITSPPPLPATTPPPQTPPLPPLPPLPAIPLQPPLPPPQPPFSQVPVSSTSILPSSPHPRTSTLSSQTNSQPPVQVSMKTQVSITAAIPHLKTSTLPPLPLPPLLPGDDDMDSPKETLPSKPAKKEKEQRTRHLLTDLPLPPELPGGDPSPPDSPEPKAITPPQQPYKKRPKICCPRYGERRQTESDWGKRCVDKFDIIGIIGEGTYGQVYKAKDKDTGELVALKKVRLDNEKEGFPITAIREIKILRQLVHQSVVNMKEIVTDKQDALDFKKDKGAFYLVFEYMDHDLMGLLESGLVHFSEDHIKSFMKQLMEGLDYCHKKNFLHRDIKCSNILLNNSGQIKLADFGLARLYNSEESRPYTNKVITLWYRPPELLLGEERYTPAIDVWSCGCILGELFTKKPIFQANLELAQLELISRLCGSPCPAVWPDVIKLPYFNTMKPKKQYRRRLREEFSFIPSAALDLLDHMLTLDPSKRCTAEQTLQSDFLKDVELSKMAPPDLPHWQDCHELWSKKRRRQRQSGIVIEDPPPSKASRKETTSGTTAEPVKNNSPAPPQPAPVKAEPGPGDAVGLGDITQQLNQSELAVLLNLLQSQTDLSIPQMAQLLNIHSNPEMQQQLEALNQSISALTEASSQQQDSESIAPEESLKEVPSVPVVLPPAEQTTPEASNTPADMQNVLAVLLSQLMKTQEPAGNLEENTNDKNSGPQGPRRTPTMPQEEAAACPPHILPPEKRPPEPPGPPPPPPPPPLVEGDLSSAPQELNPAVTAALLQLLSQPEAEPPGHLPHEHQALRPMEYSTRSHPNRTYGNTDGPETGFSSADTDERSSGPALTESLVQTPVKNRTFSGSVSHLGESNSYQGTGSVQFPGDQDLRFTRVPLALHSVVGQPFLKSEGNSNSVVHAETKLQNYGELGPGTTGANSSGTTLQWGGPAQSYGKPYRGAARVLPRGGRGRGVPY</sequence>
<feature type="chain" id="PRO_0000314470" description="Cyclin-dependent kinase 12">
    <location>
        <begin position="1"/>
        <end position="1484"/>
    </location>
</feature>
<feature type="domain" description="Protein kinase" evidence="4">
    <location>
        <begin position="723"/>
        <end position="1016"/>
    </location>
</feature>
<feature type="region of interest" description="Disordered" evidence="6">
    <location>
        <begin position="1"/>
        <end position="465"/>
    </location>
</feature>
<feature type="region of interest" description="Disordered" evidence="6">
    <location>
        <begin position="483"/>
        <end position="699"/>
    </location>
</feature>
<feature type="region of interest" description="Disordered" evidence="6">
    <location>
        <begin position="1044"/>
        <end position="1101"/>
    </location>
</feature>
<feature type="region of interest" description="Disordered" evidence="6">
    <location>
        <begin position="1156"/>
        <end position="1199"/>
    </location>
</feature>
<feature type="region of interest" description="Disordered" evidence="6">
    <location>
        <begin position="1219"/>
        <end position="1363"/>
    </location>
</feature>
<feature type="region of interest" description="Disordered" evidence="6">
    <location>
        <begin position="1437"/>
        <end position="1484"/>
    </location>
</feature>
<feature type="compositionally biased region" description="Basic and acidic residues" evidence="6">
    <location>
        <begin position="1"/>
        <end position="13"/>
    </location>
</feature>
<feature type="compositionally biased region" description="Basic residues" evidence="6">
    <location>
        <begin position="34"/>
        <end position="49"/>
    </location>
</feature>
<feature type="compositionally biased region" description="Acidic residues" evidence="6">
    <location>
        <begin position="72"/>
        <end position="84"/>
    </location>
</feature>
<feature type="compositionally biased region" description="Basic and acidic residues" evidence="6">
    <location>
        <begin position="87"/>
        <end position="106"/>
    </location>
</feature>
<feature type="compositionally biased region" description="Basic residues" evidence="6">
    <location>
        <begin position="107"/>
        <end position="119"/>
    </location>
</feature>
<feature type="compositionally biased region" description="Basic and acidic residues" evidence="6">
    <location>
        <begin position="120"/>
        <end position="161"/>
    </location>
</feature>
<feature type="compositionally biased region" description="Basic and acidic residues" evidence="6">
    <location>
        <begin position="183"/>
        <end position="196"/>
    </location>
</feature>
<feature type="compositionally biased region" description="Basic residues" evidence="6">
    <location>
        <begin position="215"/>
        <end position="224"/>
    </location>
</feature>
<feature type="compositionally biased region" description="Basic and acidic residues" evidence="6">
    <location>
        <begin position="225"/>
        <end position="234"/>
    </location>
</feature>
<feature type="compositionally biased region" description="Polar residues" evidence="6">
    <location>
        <begin position="251"/>
        <end position="275"/>
    </location>
</feature>
<feature type="compositionally biased region" description="Low complexity" evidence="6">
    <location>
        <begin position="286"/>
        <end position="304"/>
    </location>
</feature>
<feature type="compositionally biased region" description="Low complexity" evidence="6">
    <location>
        <begin position="312"/>
        <end position="349"/>
    </location>
</feature>
<feature type="compositionally biased region" description="Basic residues" evidence="6">
    <location>
        <begin position="365"/>
        <end position="380"/>
    </location>
</feature>
<feature type="compositionally biased region" description="Basic and acidic residues" evidence="6">
    <location>
        <begin position="427"/>
        <end position="455"/>
    </location>
</feature>
<feature type="compositionally biased region" description="Basic and acidic residues" evidence="6">
    <location>
        <begin position="483"/>
        <end position="501"/>
    </location>
</feature>
<feature type="compositionally biased region" description="Basic and acidic residues" evidence="6">
    <location>
        <begin position="513"/>
        <end position="522"/>
    </location>
</feature>
<feature type="compositionally biased region" description="Pro residues" evidence="6">
    <location>
        <begin position="524"/>
        <end position="570"/>
    </location>
</feature>
<feature type="compositionally biased region" description="Polar residues" evidence="6">
    <location>
        <begin position="572"/>
        <end position="611"/>
    </location>
</feature>
<feature type="compositionally biased region" description="Basic and acidic residues" evidence="6">
    <location>
        <begin position="650"/>
        <end position="662"/>
    </location>
</feature>
<feature type="compositionally biased region" description="Pro residues" evidence="6">
    <location>
        <begin position="666"/>
        <end position="681"/>
    </location>
</feature>
<feature type="compositionally biased region" description="Polar residues" evidence="6">
    <location>
        <begin position="1067"/>
        <end position="1079"/>
    </location>
</feature>
<feature type="compositionally biased region" description="Polar residues" evidence="6">
    <location>
        <begin position="1156"/>
        <end position="1167"/>
    </location>
</feature>
<feature type="compositionally biased region" description="Polar residues" evidence="6">
    <location>
        <begin position="1189"/>
        <end position="1199"/>
    </location>
</feature>
<feature type="compositionally biased region" description="Pro residues" evidence="6">
    <location>
        <begin position="1264"/>
        <end position="1277"/>
    </location>
</feature>
<feature type="compositionally biased region" description="Polar residues" evidence="6">
    <location>
        <begin position="1325"/>
        <end position="1336"/>
    </location>
</feature>
<feature type="compositionally biased region" description="Polar residues" evidence="6">
    <location>
        <begin position="1444"/>
        <end position="1454"/>
    </location>
</feature>
<feature type="compositionally biased region" description="Low complexity" evidence="6">
    <location>
        <begin position="1467"/>
        <end position="1484"/>
    </location>
</feature>
<feature type="active site" description="Proton acceptor" evidence="4 5">
    <location>
        <position position="855"/>
    </location>
</feature>
<feature type="binding site" evidence="4">
    <location>
        <begin position="729"/>
        <end position="737"/>
    </location>
    <ligand>
        <name>ATP</name>
        <dbReference type="ChEBI" id="CHEBI:30616"/>
    </ligand>
</feature>
<feature type="binding site" evidence="4">
    <location>
        <position position="752"/>
    </location>
    <ligand>
        <name>ATP</name>
        <dbReference type="ChEBI" id="CHEBI:30616"/>
    </ligand>
</feature>
<feature type="binding site" evidence="4">
    <location>
        <begin position="810"/>
        <end position="815"/>
    </location>
    <ligand>
        <name>ATP</name>
        <dbReference type="ChEBI" id="CHEBI:30616"/>
    </ligand>
</feature>
<feature type="binding site" evidence="4">
    <location>
        <position position="1036"/>
    </location>
    <ligand>
        <name>ATP</name>
        <dbReference type="ChEBI" id="CHEBI:30616"/>
    </ligand>
</feature>
<feature type="modified residue" description="Phosphothreonine" evidence="3">
    <location>
        <position position="57"/>
    </location>
</feature>
<feature type="modified residue" description="Phosphotyrosine" evidence="3">
    <location>
        <position position="73"/>
    </location>
</feature>
<feature type="modified residue" description="Phosphoserine" evidence="14">
    <location>
        <position position="235"/>
    </location>
</feature>
<feature type="modified residue" description="Phosphoserine" evidence="14">
    <location>
        <position position="248"/>
    </location>
</feature>
<feature type="modified residue" description="Phosphoserine" evidence="3">
    <location>
        <position position="264"/>
    </location>
</feature>
<feature type="modified residue" description="Phosphoserine" evidence="3">
    <location>
        <position position="273"/>
    </location>
</feature>
<feature type="modified residue" description="Phosphoserine" evidence="3">
    <location>
        <position position="275"/>
    </location>
</feature>
<feature type="modified residue" description="Phosphoserine" evidence="3">
    <location>
        <position position="300"/>
    </location>
</feature>
<feature type="modified residue" description="Phosphoserine" evidence="3">
    <location>
        <position position="302"/>
    </location>
</feature>
<feature type="modified residue" description="Phosphoserine" evidence="3">
    <location>
        <position position="309"/>
    </location>
</feature>
<feature type="modified residue" description="Phosphoserine" evidence="3">
    <location>
        <position position="311"/>
    </location>
</feature>
<feature type="modified residue" description="Phosphoserine" evidence="3">
    <location>
        <position position="317"/>
    </location>
</feature>
<feature type="modified residue" description="Phosphoserine" evidence="3">
    <location>
        <position position="322"/>
    </location>
</feature>
<feature type="modified residue" description="Phosphoserine" evidence="3">
    <location>
        <position position="324"/>
    </location>
</feature>
<feature type="modified residue" description="Phosphoserine" evidence="3">
    <location>
        <position position="331"/>
    </location>
</feature>
<feature type="modified residue" description="Phosphoserine" evidence="3">
    <location>
        <position position="332"/>
    </location>
</feature>
<feature type="modified residue" description="Phosphoserine" evidence="3">
    <location>
        <position position="333"/>
    </location>
</feature>
<feature type="modified residue" description="Phosphoserine" evidence="3">
    <location>
        <position position="337"/>
    </location>
</feature>
<feature type="modified residue" description="Phosphoserine" evidence="3">
    <location>
        <position position="340"/>
    </location>
</feature>
<feature type="modified residue" description="Phosphoserine" evidence="3">
    <location>
        <position position="342"/>
    </location>
</feature>
<feature type="modified residue" description="Phosphoserine" evidence="3">
    <location>
        <position position="344"/>
    </location>
</feature>
<feature type="modified residue" description="Phosphoserine" evidence="12 13 14">
    <location>
        <position position="382"/>
    </location>
</feature>
<feature type="modified residue" description="Phosphoserine" evidence="12 13 14">
    <location>
        <position position="384"/>
    </location>
</feature>
<feature type="modified residue" description="Phosphoserine" evidence="3">
    <location>
        <position position="399"/>
    </location>
</feature>
<feature type="modified residue" description="Phosphoserine" evidence="3">
    <location>
        <position position="419"/>
    </location>
</feature>
<feature type="modified residue" description="Phosphoserine" evidence="3">
    <location>
        <position position="422"/>
    </location>
</feature>
<feature type="modified residue" description="Phosphothreonine" evidence="3">
    <location>
        <position position="511"/>
    </location>
</feature>
<feature type="modified residue" description="Phosphoserine" evidence="3">
    <location>
        <position position="610"/>
    </location>
</feature>
<feature type="modified residue" description="Phosphoserine" evidence="2">
    <location>
        <position position="640"/>
    </location>
</feature>
<feature type="modified residue" description="Phosphoserine" evidence="14">
    <location>
        <position position="677"/>
    </location>
</feature>
<feature type="modified residue" description="Phosphoserine" evidence="14">
    <location>
        <position position="681"/>
    </location>
</feature>
<feature type="modified residue" description="Phosphothreonine" evidence="3">
    <location>
        <position position="688"/>
    </location>
</feature>
<feature type="modified residue" description="Phosphoserine" evidence="3">
    <location>
        <position position="885"/>
    </location>
</feature>
<feature type="modified residue" description="Phosphothreonine" evidence="14">
    <location>
        <position position="889"/>
    </location>
</feature>
<feature type="modified residue" description="Phosphoserine" evidence="3">
    <location>
        <position position="1049"/>
    </location>
</feature>
<feature type="modified residue" description="Phosphoserine" evidence="12 14">
    <location>
        <position position="1079"/>
    </location>
</feature>
<feature type="modified residue" description="Phosphothreonine" evidence="14">
    <location>
        <position position="1240"/>
    </location>
</feature>
<feature type="modified residue" description="Phosphothreonine" evidence="14">
    <location>
        <position position="1242"/>
    </location>
</feature>
<feature type="cross-link" description="Glycyl lysine isopeptide (Lys-Gly) (interchain with G-Cter in SUMO2)" evidence="3">
    <location>
        <position position="262"/>
    </location>
</feature>
<feature type="cross-link" description="Glycyl lysine isopeptide (Lys-Gly) (interchain with G-Cter in SUMO2)" evidence="3">
    <location>
        <position position="506"/>
    </location>
</feature>
<feature type="cross-link" description="Glycyl lysine isopeptide (Lys-Gly) (interchain with G-Cter in SUMO2)" evidence="3">
    <location>
        <position position="651"/>
    </location>
</feature>
<feature type="splice variant" id="VSP_030285" description="In isoform 2." evidence="9 10">
    <original>ACPPHILPP</original>
    <variation>GKQTGHESH</variation>
    <location>
        <begin position="1250"/>
        <end position="1258"/>
    </location>
</feature>
<feature type="splice variant" id="VSP_030286" description="In isoform 3." evidence="8">
    <location>
        <begin position="1250"/>
        <end position="1258"/>
    </location>
</feature>
<feature type="splice variant" id="VSP_030287" description="In isoform 2." evidence="9 10">
    <location>
        <begin position="1259"/>
        <end position="1484"/>
    </location>
</feature>
<feature type="sequence conflict" description="In Ref. 1; AAL69526." evidence="11" ref="1">
    <original>L</original>
    <variation>I</variation>
    <location>
        <position position="346"/>
    </location>
</feature>
<feature type="sequence conflict" description="In Ref. 1; AAL69526." evidence="11" ref="1">
    <original>R</original>
    <variation>S</variation>
    <location>
        <position position="363"/>
    </location>
</feature>
<feature type="sequence conflict" description="In Ref. 1; AAL69526." evidence="11" ref="1">
    <original>R</original>
    <variation>H</variation>
    <location>
        <position position="377"/>
    </location>
</feature>
<feature type="sequence conflict" description="In Ref. 4; BAC98047." evidence="11" ref="4">
    <original>ILP</original>
    <variation>FCL</variation>
    <location>
        <begin position="425"/>
        <end position="427"/>
    </location>
</feature>
<feature type="sequence conflict" description="In Ref. 1; AAL69526." evidence="11" ref="1">
    <original>G</original>
    <variation>V</variation>
    <location>
        <position position="496"/>
    </location>
</feature>
<feature type="sequence conflict" description="In Ref. 1; AAL69526." evidence="11" ref="1">
    <original>L</original>
    <variation>V</variation>
    <location>
        <position position="562"/>
    </location>
</feature>
<feature type="sequence conflict" description="In Ref. 1; AAL69526." evidence="11" ref="1">
    <original>R</original>
    <variation>Q</variation>
    <location>
        <position position="854"/>
    </location>
</feature>
<feature type="sequence conflict" description="In Ref. 1; AAL69526." evidence="11" ref="1">
    <original>L</original>
    <variation>V</variation>
    <location>
        <position position="863"/>
    </location>
</feature>
<feature type="sequence conflict" description="In Ref. 1; AAL69526." evidence="11" ref="1">
    <original>K</original>
    <variation>R</variation>
    <location>
        <position position="870"/>
    </location>
</feature>
<feature type="modified residue" description="Phosphothreonine" evidence="14">
    <location sequence="Q14AX6-3">
        <position position="1240"/>
    </location>
</feature>
<feature type="modified residue" description="Phosphothreonine" evidence="14">
    <location sequence="Q14AX6-3">
        <position position="1242"/>
    </location>
</feature>
<proteinExistence type="evidence at protein level"/>
<reference key="1">
    <citation type="submission" date="2002-01" db="EMBL/GenBank/DDBJ databases">
        <title>Characterization of a putative SR-related protein kinase that is differentially expressed in the embryonic nervous system.</title>
        <authorList>
            <person name="Lin S.-F."/>
            <person name="Chen H.-H."/>
            <person name="Fann M.-J."/>
        </authorList>
    </citation>
    <scope>NUCLEOTIDE SEQUENCE [MRNA] (ISOFORM 2)</scope>
    <source>
        <strain>BALB/cJ</strain>
    </source>
</reference>
<reference key="2">
    <citation type="journal article" date="2009" name="PLoS Biol.">
        <title>Lineage-specific biology revealed by a finished genome assembly of the mouse.</title>
        <authorList>
            <person name="Church D.M."/>
            <person name="Goodstadt L."/>
            <person name="Hillier L.W."/>
            <person name="Zody M.C."/>
            <person name="Goldstein S."/>
            <person name="She X."/>
            <person name="Bult C.J."/>
            <person name="Agarwala R."/>
            <person name="Cherry J.L."/>
            <person name="DiCuccio M."/>
            <person name="Hlavina W."/>
            <person name="Kapustin Y."/>
            <person name="Meric P."/>
            <person name="Maglott D."/>
            <person name="Birtle Z."/>
            <person name="Marques A.C."/>
            <person name="Graves T."/>
            <person name="Zhou S."/>
            <person name="Teague B."/>
            <person name="Potamousis K."/>
            <person name="Churas C."/>
            <person name="Place M."/>
            <person name="Herschleb J."/>
            <person name="Runnheim R."/>
            <person name="Forrest D."/>
            <person name="Amos-Landgraf J."/>
            <person name="Schwartz D.C."/>
            <person name="Cheng Z."/>
            <person name="Lindblad-Toh K."/>
            <person name="Eichler E.E."/>
            <person name="Ponting C.P."/>
        </authorList>
    </citation>
    <scope>NUCLEOTIDE SEQUENCE [LARGE SCALE GENOMIC DNA]</scope>
    <source>
        <strain>C57BL/6J</strain>
    </source>
</reference>
<reference key="3">
    <citation type="journal article" date="2004" name="Genome Res.">
        <title>The status, quality, and expansion of the NIH full-length cDNA project: the Mammalian Gene Collection (MGC).</title>
        <authorList>
            <consortium name="The MGC Project Team"/>
        </authorList>
    </citation>
    <scope>NUCLEOTIDE SEQUENCE [LARGE SCALE MRNA] (ISOFORM 2)</scope>
</reference>
<reference key="4">
    <citation type="journal article" date="2003" name="DNA Res.">
        <title>Prediction of the coding sequences of mouse homologues of KIAA gene: III. The complete nucleotide sequences of 500 mouse KIAA-homologous cDNAs identified by screening of terminal sequences of cDNA clones randomly sampled from size-fractionated libraries.</title>
        <authorList>
            <person name="Okazaki N."/>
            <person name="Kikuno R."/>
            <person name="Ohara R."/>
            <person name="Inamoto S."/>
            <person name="Koseki H."/>
            <person name="Hiraoka S."/>
            <person name="Saga Y."/>
            <person name="Nagase T."/>
            <person name="Ohara O."/>
            <person name="Koga H."/>
        </authorList>
    </citation>
    <scope>NUCLEOTIDE SEQUENCE [LARGE SCALE MRNA] OF 425-1484 (ISOFORM 3)</scope>
    <source>
        <tissue>Embryonic tail</tissue>
    </source>
</reference>
<reference key="5">
    <citation type="journal article" date="2007" name="Proc. Natl. Acad. Sci. U.S.A.">
        <title>Large-scale phosphorylation analysis of mouse liver.</title>
        <authorList>
            <person name="Villen J."/>
            <person name="Beausoleil S.A."/>
            <person name="Gerber S.A."/>
            <person name="Gygi S.P."/>
        </authorList>
    </citation>
    <scope>PHOSPHORYLATION [LARGE SCALE ANALYSIS] AT SER-382; SER-384 AND SER-1079</scope>
    <scope>IDENTIFICATION BY MASS SPECTROMETRY [LARGE SCALE ANALYSIS]</scope>
    <source>
        <tissue>Liver</tissue>
    </source>
</reference>
<reference key="6">
    <citation type="journal article" date="2009" name="Mol. Cell. Proteomics">
        <title>Large scale localization of protein phosphorylation by use of electron capture dissociation mass spectrometry.</title>
        <authorList>
            <person name="Sweet S.M."/>
            <person name="Bailey C.M."/>
            <person name="Cunningham D.L."/>
            <person name="Heath J.K."/>
            <person name="Cooper H.J."/>
        </authorList>
    </citation>
    <scope>PHOSPHORYLATION [LARGE SCALE ANALYSIS] AT SER-382 AND SER-384</scope>
    <scope>IDENTIFICATION BY MASS SPECTROMETRY [LARGE SCALE ANALYSIS]</scope>
    <source>
        <tissue>Embryonic fibroblast</tissue>
    </source>
</reference>
<reference key="7">
    <citation type="journal article" date="2010" name="Cell">
        <title>A tissue-specific atlas of mouse protein phosphorylation and expression.</title>
        <authorList>
            <person name="Huttlin E.L."/>
            <person name="Jedrychowski M.P."/>
            <person name="Elias J.E."/>
            <person name="Goswami T."/>
            <person name="Rad R."/>
            <person name="Beausoleil S.A."/>
            <person name="Villen J."/>
            <person name="Haas W."/>
            <person name="Sowa M.E."/>
            <person name="Gygi S.P."/>
        </authorList>
    </citation>
    <scope>PHOSPHORYLATION [LARGE SCALE ANALYSIS] AT SER-235; SER-248; SER-382; SER-384; SER-677; SER-681; THR-889; SER-1079; THR-1240 AND THR-1242</scope>
    <scope>PHOSPHORYLATION [LARGE SCALE ANALYSIS] AT THR-1240 AND THR-1242 (ISOFORM 3)</scope>
    <scope>IDENTIFICATION BY MASS SPECTROMETRY [LARGE SCALE ANALYSIS]</scope>
    <source>
        <tissue>Brain</tissue>
        <tissue>Brown adipose tissue</tissue>
        <tissue>Heart</tissue>
        <tissue>Kidney</tissue>
        <tissue>Liver</tissue>
        <tissue>Lung</tissue>
        <tissue>Pancreas</tissue>
        <tissue>Spleen</tissue>
        <tissue>Testis</tissue>
    </source>
</reference>
<reference key="8">
    <citation type="journal article" date="2011" name="Genes Dev.">
        <title>The Cyclin K/Cdk12 complex maintains genomic stability via regulation of expression of DNA damage response genes.</title>
        <authorList>
            <person name="Blazek D."/>
            <person name="Kohoutek J."/>
            <person name="Bartholomeeusen K."/>
            <person name="Johansen E."/>
            <person name="Hulinkova P."/>
            <person name="Luo Z."/>
            <person name="Cimermancic P."/>
            <person name="Ule J."/>
            <person name="Peterlin B.M."/>
        </authorList>
    </citation>
    <scope>FUNCTION</scope>
    <scope>SUBUNIT</scope>
    <scope>SUBCELLULAR LOCATION</scope>
</reference>
<dbReference type="EC" id="2.7.11.22"/>
<dbReference type="EC" id="2.7.11.23"/>
<dbReference type="EMBL" id="AY072295">
    <property type="protein sequence ID" value="AAL69526.1"/>
    <property type="molecule type" value="mRNA"/>
</dbReference>
<dbReference type="EMBL" id="AL591205">
    <property type="protein sequence ID" value="CAM21267.1"/>
    <property type="molecule type" value="Genomic_DNA"/>
</dbReference>
<dbReference type="EMBL" id="AL591205">
    <property type="protein sequence ID" value="CAM21268.1"/>
    <property type="molecule type" value="Genomic_DNA"/>
</dbReference>
<dbReference type="EMBL" id="AL591205">
    <property type="protein sequence ID" value="CAM21269.1"/>
    <property type="molecule type" value="Genomic_DNA"/>
</dbReference>
<dbReference type="EMBL" id="AL591205">
    <property type="protein sequence ID" value="CAM21270.1"/>
    <property type="status" value="ALT_SEQ"/>
    <property type="molecule type" value="Genomic_DNA"/>
</dbReference>
<dbReference type="EMBL" id="BC116645">
    <property type="protein sequence ID" value="AAI16646.1"/>
    <property type="molecule type" value="mRNA"/>
</dbReference>
<dbReference type="EMBL" id="AK129237">
    <property type="protein sequence ID" value="BAC98047.1"/>
    <property type="molecule type" value="mRNA"/>
</dbReference>
<dbReference type="CCDS" id="CCDS25342.1">
    <molecule id="Q14AX6-2"/>
</dbReference>
<dbReference type="CCDS" id="CCDS48901.1">
    <molecule id="Q14AX6-1"/>
</dbReference>
<dbReference type="CCDS" id="CCDS48902.1">
    <molecule id="Q14AX6-3"/>
</dbReference>
<dbReference type="RefSeq" id="NP_001103096.1">
    <molecule id="Q14AX6-1"/>
    <property type="nucleotide sequence ID" value="NM_001109626.1"/>
</dbReference>
<dbReference type="RefSeq" id="NP_001103098.1">
    <molecule id="Q14AX6-3"/>
    <property type="nucleotide sequence ID" value="NM_001109628.1"/>
</dbReference>
<dbReference type="RefSeq" id="NP_081228.2">
    <molecule id="Q14AX6-2"/>
    <property type="nucleotide sequence ID" value="NM_026952.2"/>
</dbReference>
<dbReference type="RefSeq" id="XP_030102133.1">
    <molecule id="Q14AX6-1"/>
    <property type="nucleotide sequence ID" value="XM_030246273.1"/>
</dbReference>
<dbReference type="RefSeq" id="XP_030102134.1">
    <molecule id="Q14AX6-1"/>
    <property type="nucleotide sequence ID" value="XM_030246274.2"/>
</dbReference>
<dbReference type="RefSeq" id="XP_030102135.1">
    <molecule id="Q14AX6-3"/>
    <property type="nucleotide sequence ID" value="XM_030246275.2"/>
</dbReference>
<dbReference type="SMR" id="Q14AX6"/>
<dbReference type="BioGRID" id="213247">
    <property type="interactions" value="20"/>
</dbReference>
<dbReference type="ComplexPortal" id="CPX-251">
    <property type="entry name" value="Cyclin K-CDK12 complex"/>
</dbReference>
<dbReference type="FunCoup" id="Q14AX6">
    <property type="interactions" value="3425"/>
</dbReference>
<dbReference type="STRING" id="10090.ENSMUSP00000103162"/>
<dbReference type="BindingDB" id="Q14AX6"/>
<dbReference type="ChEMBL" id="CHEMBL5465307"/>
<dbReference type="GlyGen" id="Q14AX6">
    <property type="glycosylation" value="3 sites, 1 O-linked glycan (3 sites)"/>
</dbReference>
<dbReference type="iPTMnet" id="Q14AX6"/>
<dbReference type="PhosphoSitePlus" id="Q14AX6"/>
<dbReference type="jPOST" id="Q14AX6"/>
<dbReference type="PaxDb" id="10090-ENSMUSP00000103162"/>
<dbReference type="PeptideAtlas" id="Q14AX6"/>
<dbReference type="ProteomicsDB" id="283768">
    <molecule id="Q14AX6-1"/>
</dbReference>
<dbReference type="ProteomicsDB" id="283769">
    <molecule id="Q14AX6-2"/>
</dbReference>
<dbReference type="ProteomicsDB" id="283770">
    <molecule id="Q14AX6-3"/>
</dbReference>
<dbReference type="Pumba" id="Q14AX6"/>
<dbReference type="Antibodypedia" id="2096">
    <property type="antibodies" value="233 antibodies from 32 providers"/>
</dbReference>
<dbReference type="DNASU" id="69131"/>
<dbReference type="Ensembl" id="ENSMUST00000003203.14">
    <molecule id="Q14AX6-2"/>
    <property type="protein sequence ID" value="ENSMUSP00000003203.8"/>
    <property type="gene ID" value="ENSMUSG00000003119.15"/>
</dbReference>
<dbReference type="Ensembl" id="ENSMUST00000107538.2">
    <molecule id="Q14AX6-1"/>
    <property type="protein sequence ID" value="ENSMUSP00000103162.2"/>
    <property type="gene ID" value="ENSMUSG00000003119.15"/>
</dbReference>
<dbReference type="Ensembl" id="ENSMUST00000107539.8">
    <molecule id="Q14AX6-3"/>
    <property type="protein sequence ID" value="ENSMUSP00000103163.2"/>
    <property type="gene ID" value="ENSMUSG00000003119.15"/>
</dbReference>
<dbReference type="GeneID" id="69131"/>
<dbReference type="KEGG" id="mmu:69131"/>
<dbReference type="UCSC" id="uc007lfr.2">
    <molecule id="Q14AX6-1"/>
    <property type="organism name" value="mouse"/>
</dbReference>
<dbReference type="UCSC" id="uc007lfs.2">
    <molecule id="Q14AX6-2"/>
    <property type="organism name" value="mouse"/>
</dbReference>
<dbReference type="UCSC" id="uc007lfu.2">
    <molecule id="Q14AX6-3"/>
    <property type="organism name" value="mouse"/>
</dbReference>
<dbReference type="AGR" id="MGI:1098802"/>
<dbReference type="CTD" id="51755"/>
<dbReference type="MGI" id="MGI:1098802">
    <property type="gene designation" value="Cdk12"/>
</dbReference>
<dbReference type="VEuPathDB" id="HostDB:ENSMUSG00000003119"/>
<dbReference type="eggNOG" id="KOG0600">
    <property type="taxonomic scope" value="Eukaryota"/>
</dbReference>
<dbReference type="GeneTree" id="ENSGT00940000157595"/>
<dbReference type="HOGENOM" id="CLU_004166_2_1_1"/>
<dbReference type="InParanoid" id="Q14AX6"/>
<dbReference type="OMA" id="HWGAPAQ"/>
<dbReference type="OrthoDB" id="28397at2759"/>
<dbReference type="PhylomeDB" id="Q14AX6"/>
<dbReference type="TreeFam" id="TF101060"/>
<dbReference type="Reactome" id="R-MMU-6796648">
    <property type="pathway name" value="TP53 Regulates Transcription of DNA Repair Genes"/>
</dbReference>
<dbReference type="BioGRID-ORCS" id="69131">
    <property type="hits" value="25 hits in 84 CRISPR screens"/>
</dbReference>
<dbReference type="CD-CODE" id="CE726F99">
    <property type="entry name" value="Postsynaptic density"/>
</dbReference>
<dbReference type="ChiTaRS" id="Cdk12">
    <property type="organism name" value="mouse"/>
</dbReference>
<dbReference type="PRO" id="PR:Q14AX6"/>
<dbReference type="Proteomes" id="UP000000589">
    <property type="component" value="Chromosome 11"/>
</dbReference>
<dbReference type="RNAct" id="Q14AX6">
    <property type="molecule type" value="protein"/>
</dbReference>
<dbReference type="Bgee" id="ENSMUSG00000003119">
    <property type="expression patterns" value="Expressed in animal zygote and 224 other cell types or tissues"/>
</dbReference>
<dbReference type="GO" id="GO:0002944">
    <property type="term" value="C:cyclin K-CDK12 complex"/>
    <property type="evidence" value="ECO:0000266"/>
    <property type="project" value="MGI"/>
</dbReference>
<dbReference type="GO" id="GO:0019908">
    <property type="term" value="C:nuclear cyclin-dependent protein kinase holoenzyme complex"/>
    <property type="evidence" value="ECO:0000250"/>
    <property type="project" value="UniProtKB"/>
</dbReference>
<dbReference type="GO" id="GO:0016607">
    <property type="term" value="C:nuclear speck"/>
    <property type="evidence" value="ECO:0000250"/>
    <property type="project" value="UniProtKB"/>
</dbReference>
<dbReference type="GO" id="GO:0005524">
    <property type="term" value="F:ATP binding"/>
    <property type="evidence" value="ECO:0007669"/>
    <property type="project" value="UniProtKB-KW"/>
</dbReference>
<dbReference type="GO" id="GO:0030332">
    <property type="term" value="F:cyclin binding"/>
    <property type="evidence" value="ECO:0000266"/>
    <property type="project" value="MGI"/>
</dbReference>
<dbReference type="GO" id="GO:0004693">
    <property type="term" value="F:cyclin-dependent protein serine/threonine kinase activity"/>
    <property type="evidence" value="ECO:0007669"/>
    <property type="project" value="UniProtKB-EC"/>
</dbReference>
<dbReference type="GO" id="GO:0004672">
    <property type="term" value="F:protein kinase activity"/>
    <property type="evidence" value="ECO:0000250"/>
    <property type="project" value="HGNC-UCL"/>
</dbReference>
<dbReference type="GO" id="GO:0019901">
    <property type="term" value="F:protein kinase binding"/>
    <property type="evidence" value="ECO:0000314"/>
    <property type="project" value="MGI"/>
</dbReference>
<dbReference type="GO" id="GO:0106310">
    <property type="term" value="F:protein serine kinase activity"/>
    <property type="evidence" value="ECO:0007669"/>
    <property type="project" value="RHEA"/>
</dbReference>
<dbReference type="GO" id="GO:0008353">
    <property type="term" value="F:RNA polymerase II CTD heptapeptide repeat kinase activity"/>
    <property type="evidence" value="ECO:0000250"/>
    <property type="project" value="UniProtKB"/>
</dbReference>
<dbReference type="GO" id="GO:0071391">
    <property type="term" value="P:cellular response to estrogen stimulus"/>
    <property type="evidence" value="ECO:0007669"/>
    <property type="project" value="Ensembl"/>
</dbReference>
<dbReference type="GO" id="GO:0006397">
    <property type="term" value="P:mRNA processing"/>
    <property type="evidence" value="ECO:0007669"/>
    <property type="project" value="UniProtKB-KW"/>
</dbReference>
<dbReference type="GO" id="GO:0033147">
    <property type="term" value="P:negative regulation of intracellular estrogen receptor signaling pathway"/>
    <property type="evidence" value="ECO:0007669"/>
    <property type="project" value="Ensembl"/>
</dbReference>
<dbReference type="GO" id="GO:0043409">
    <property type="term" value="P:negative regulation of MAPK cascade"/>
    <property type="evidence" value="ECO:0007669"/>
    <property type="project" value="Ensembl"/>
</dbReference>
<dbReference type="GO" id="GO:2000737">
    <property type="term" value="P:negative regulation of stem cell differentiation"/>
    <property type="evidence" value="ECO:0000315"/>
    <property type="project" value="MGI"/>
</dbReference>
<dbReference type="GO" id="GO:0045944">
    <property type="term" value="P:positive regulation of transcription by RNA polymerase II"/>
    <property type="evidence" value="ECO:0000250"/>
    <property type="project" value="UniProtKB"/>
</dbReference>
<dbReference type="GO" id="GO:0032968">
    <property type="term" value="P:positive regulation of transcription elongation by RNA polymerase II"/>
    <property type="evidence" value="ECO:0000266"/>
    <property type="project" value="ComplexPortal"/>
</dbReference>
<dbReference type="GO" id="GO:0043405">
    <property type="term" value="P:regulation of MAP kinase activity"/>
    <property type="evidence" value="ECO:0000250"/>
    <property type="project" value="UniProtKB"/>
</dbReference>
<dbReference type="GO" id="GO:0008380">
    <property type="term" value="P:RNA splicing"/>
    <property type="evidence" value="ECO:0000250"/>
    <property type="project" value="UniProtKB"/>
</dbReference>
<dbReference type="GO" id="GO:0006366">
    <property type="term" value="P:transcription by RNA polymerase II"/>
    <property type="evidence" value="ECO:0007669"/>
    <property type="project" value="Ensembl"/>
</dbReference>
<dbReference type="CDD" id="cd07864">
    <property type="entry name" value="STKc_CDK12"/>
    <property type="match status" value="1"/>
</dbReference>
<dbReference type="FunFam" id="1.10.510.10:FF:000102">
    <property type="entry name" value="cyclin-dependent kinase 12 isoform X1"/>
    <property type="match status" value="1"/>
</dbReference>
<dbReference type="FunFam" id="3.30.200.20:FF:000074">
    <property type="entry name" value="cyclin-dependent kinase 12 isoform X2"/>
    <property type="match status" value="1"/>
</dbReference>
<dbReference type="Gene3D" id="3.30.200.20">
    <property type="entry name" value="Phosphorylase Kinase, domain 1"/>
    <property type="match status" value="1"/>
</dbReference>
<dbReference type="Gene3D" id="1.10.510.10">
    <property type="entry name" value="Transferase(Phosphotransferase) domain 1"/>
    <property type="match status" value="1"/>
</dbReference>
<dbReference type="InterPro" id="IPR050108">
    <property type="entry name" value="CDK"/>
</dbReference>
<dbReference type="InterPro" id="IPR011009">
    <property type="entry name" value="Kinase-like_dom_sf"/>
</dbReference>
<dbReference type="InterPro" id="IPR000719">
    <property type="entry name" value="Prot_kinase_dom"/>
</dbReference>
<dbReference type="InterPro" id="IPR017441">
    <property type="entry name" value="Protein_kinase_ATP_BS"/>
</dbReference>
<dbReference type="InterPro" id="IPR008271">
    <property type="entry name" value="Ser/Thr_kinase_AS"/>
</dbReference>
<dbReference type="PANTHER" id="PTHR24056">
    <property type="entry name" value="CELL DIVISION PROTEIN KINASE"/>
    <property type="match status" value="1"/>
</dbReference>
<dbReference type="PANTHER" id="PTHR24056:SF126">
    <property type="entry name" value="CYCLIN-DEPENDENT KINASE 12"/>
    <property type="match status" value="1"/>
</dbReference>
<dbReference type="Pfam" id="PF00069">
    <property type="entry name" value="Pkinase"/>
    <property type="match status" value="1"/>
</dbReference>
<dbReference type="SMART" id="SM00220">
    <property type="entry name" value="S_TKc"/>
    <property type="match status" value="1"/>
</dbReference>
<dbReference type="SUPFAM" id="SSF56112">
    <property type="entry name" value="Protein kinase-like (PK-like)"/>
    <property type="match status" value="1"/>
</dbReference>
<dbReference type="PROSITE" id="PS00107">
    <property type="entry name" value="PROTEIN_KINASE_ATP"/>
    <property type="match status" value="1"/>
</dbReference>
<dbReference type="PROSITE" id="PS50011">
    <property type="entry name" value="PROTEIN_KINASE_DOM"/>
    <property type="match status" value="1"/>
</dbReference>
<dbReference type="PROSITE" id="PS00108">
    <property type="entry name" value="PROTEIN_KINASE_ST"/>
    <property type="match status" value="1"/>
</dbReference>
<comment type="function">
    <text evidence="7">Cyclin-dependent kinase that phosphorylates the C-terminal domain (CTD) of the large subunit of RNA polymerase II (POLR2A), thereby acting as a key regulator of transcription elongation. Regulates the expression of genes involved in DNA repair and is required for the maintenance of genomic stability. Preferentially phosphorylates 'Ser-5' in CTD repeats that are already phosphorylated at 'Ser-7', but can also phosphorylate 'Ser-2'. Required for RNA splicing, possibly by phosphorylating SRSF1/SF2. Involved in regulation of MAP kinase activity, possibly leading to affect the response to estrogen inhibitors.</text>
</comment>
<comment type="catalytic activity">
    <reaction>
        <text>[DNA-directed RNA polymerase] + ATP = phospho-[DNA-directed RNA polymerase] + ADP + H(+)</text>
        <dbReference type="Rhea" id="RHEA:10216"/>
        <dbReference type="Rhea" id="RHEA-COMP:11321"/>
        <dbReference type="Rhea" id="RHEA-COMP:11322"/>
        <dbReference type="ChEBI" id="CHEBI:15378"/>
        <dbReference type="ChEBI" id="CHEBI:30616"/>
        <dbReference type="ChEBI" id="CHEBI:43176"/>
        <dbReference type="ChEBI" id="CHEBI:68546"/>
        <dbReference type="ChEBI" id="CHEBI:456216"/>
        <dbReference type="EC" id="2.7.11.23"/>
    </reaction>
</comment>
<comment type="catalytic activity">
    <reaction>
        <text>L-seryl-[protein] + ATP = O-phospho-L-seryl-[protein] + ADP + H(+)</text>
        <dbReference type="Rhea" id="RHEA:17989"/>
        <dbReference type="Rhea" id="RHEA-COMP:9863"/>
        <dbReference type="Rhea" id="RHEA-COMP:11604"/>
        <dbReference type="ChEBI" id="CHEBI:15378"/>
        <dbReference type="ChEBI" id="CHEBI:29999"/>
        <dbReference type="ChEBI" id="CHEBI:30616"/>
        <dbReference type="ChEBI" id="CHEBI:83421"/>
        <dbReference type="ChEBI" id="CHEBI:456216"/>
        <dbReference type="EC" id="2.7.11.22"/>
    </reaction>
</comment>
<comment type="catalytic activity">
    <reaction>
        <text>L-threonyl-[protein] + ATP = O-phospho-L-threonyl-[protein] + ADP + H(+)</text>
        <dbReference type="Rhea" id="RHEA:46608"/>
        <dbReference type="Rhea" id="RHEA-COMP:11060"/>
        <dbReference type="Rhea" id="RHEA-COMP:11605"/>
        <dbReference type="ChEBI" id="CHEBI:15378"/>
        <dbReference type="ChEBI" id="CHEBI:30013"/>
        <dbReference type="ChEBI" id="CHEBI:30616"/>
        <dbReference type="ChEBI" id="CHEBI:61977"/>
        <dbReference type="ChEBI" id="CHEBI:456216"/>
        <dbReference type="EC" id="2.7.11.22"/>
    </reaction>
</comment>
<comment type="subunit">
    <text evidence="1">Interacts with CCNL1 and CCNL2.</text>
</comment>
<comment type="subcellular location">
    <subcellularLocation>
        <location evidence="1">Nucleus</location>
    </subcellularLocation>
    <subcellularLocation>
        <location evidence="1">Nucleus speckle</location>
    </subcellularLocation>
    <text evidence="1">Colocalized with nuclear speckles throughout interphase.</text>
</comment>
<comment type="alternative products">
    <event type="alternative splicing"/>
    <isoform>
        <id>Q14AX6-1</id>
        <name>1</name>
        <sequence type="displayed"/>
    </isoform>
    <isoform>
        <id>Q14AX6-2</id>
        <name>2</name>
        <sequence type="described" ref="VSP_030285 VSP_030287"/>
    </isoform>
    <isoform>
        <id>Q14AX6-3</id>
        <name>3</name>
        <sequence type="described" ref="VSP_030286"/>
    </isoform>
</comment>
<comment type="PTM">
    <text evidence="1">Phosphorylation at Thr-889 increases kinase activity.</text>
</comment>
<comment type="similarity">
    <text evidence="11">Belongs to the protein kinase superfamily. CMGC Ser/Thr protein kinase family. CDC2/CDKX subfamily.</text>
</comment>
<comment type="sequence caution" evidence="11">
    <conflict type="erroneous gene model prediction">
        <sequence resource="EMBL-CDS" id="CAM21270"/>
    </conflict>
</comment>
<protein>
    <recommendedName>
        <fullName>Cyclin-dependent kinase 12</fullName>
        <ecNumber>2.7.11.22</ecNumber>
        <ecNumber>2.7.11.23</ecNumber>
    </recommendedName>
    <alternativeName>
        <fullName>Cdc2-related kinase, arginine/serine-rich</fullName>
        <shortName>CrkRS</shortName>
    </alternativeName>
    <alternativeName>
        <fullName>Cell division cycle 2-related protein kinase 7</fullName>
        <shortName>CDC2-related protein kinase 7</shortName>
    </alternativeName>
    <alternativeName>
        <fullName>Cell division protein kinase 12</fullName>
    </alternativeName>
</protein>
<name>CDK12_MOUSE</name>
<keyword id="KW-0025">Alternative splicing</keyword>
<keyword id="KW-0067">ATP-binding</keyword>
<keyword id="KW-1017">Isopeptide bond</keyword>
<keyword id="KW-0418">Kinase</keyword>
<keyword id="KW-0507">mRNA processing</keyword>
<keyword id="KW-0508">mRNA splicing</keyword>
<keyword id="KW-0547">Nucleotide-binding</keyword>
<keyword id="KW-0539">Nucleus</keyword>
<keyword id="KW-0597">Phosphoprotein</keyword>
<keyword id="KW-1185">Reference proteome</keyword>
<keyword id="KW-0723">Serine/threonine-protein kinase</keyword>
<keyword id="KW-0808">Transferase</keyword>
<keyword id="KW-0832">Ubl conjugation</keyword>
<organism>
    <name type="scientific">Mus musculus</name>
    <name type="common">Mouse</name>
    <dbReference type="NCBI Taxonomy" id="10090"/>
    <lineage>
        <taxon>Eukaryota</taxon>
        <taxon>Metazoa</taxon>
        <taxon>Chordata</taxon>
        <taxon>Craniata</taxon>
        <taxon>Vertebrata</taxon>
        <taxon>Euteleostomi</taxon>
        <taxon>Mammalia</taxon>
        <taxon>Eutheria</taxon>
        <taxon>Euarchontoglires</taxon>
        <taxon>Glires</taxon>
        <taxon>Rodentia</taxon>
        <taxon>Myomorpha</taxon>
        <taxon>Muroidea</taxon>
        <taxon>Muridae</taxon>
        <taxon>Murinae</taxon>
        <taxon>Mus</taxon>
        <taxon>Mus</taxon>
    </lineage>
</organism>
<evidence type="ECO:0000250" key="1"/>
<evidence type="ECO:0000250" key="2">
    <source>
        <dbReference type="UniProtKB" id="Q3MJK5"/>
    </source>
</evidence>
<evidence type="ECO:0000250" key="3">
    <source>
        <dbReference type="UniProtKB" id="Q9NYV4"/>
    </source>
</evidence>
<evidence type="ECO:0000255" key="4">
    <source>
        <dbReference type="PROSITE-ProRule" id="PRU00159"/>
    </source>
</evidence>
<evidence type="ECO:0000255" key="5">
    <source>
        <dbReference type="PROSITE-ProRule" id="PRU10027"/>
    </source>
</evidence>
<evidence type="ECO:0000256" key="6">
    <source>
        <dbReference type="SAM" id="MobiDB-lite"/>
    </source>
</evidence>
<evidence type="ECO:0000269" key="7">
    <source>
    </source>
</evidence>
<evidence type="ECO:0000303" key="8">
    <source>
    </source>
</evidence>
<evidence type="ECO:0000303" key="9">
    <source>
    </source>
</evidence>
<evidence type="ECO:0000303" key="10">
    <source ref="1"/>
</evidence>
<evidence type="ECO:0000305" key="11"/>
<evidence type="ECO:0007744" key="12">
    <source>
    </source>
</evidence>
<evidence type="ECO:0007744" key="13">
    <source>
    </source>
</evidence>
<evidence type="ECO:0007744" key="14">
    <source>
    </source>
</evidence>
<gene>
    <name type="primary">Cdk12</name>
    <name type="synonym">Crk7</name>
    <name type="synonym">Crkrs</name>
    <name type="synonym">Kiaa0904</name>
</gene>